<proteinExistence type="inferred from homology"/>
<organism>
    <name type="scientific">Erythrobacter litoralis (strain HTCC2594)</name>
    <dbReference type="NCBI Taxonomy" id="314225"/>
    <lineage>
        <taxon>Bacteria</taxon>
        <taxon>Pseudomonadati</taxon>
        <taxon>Pseudomonadota</taxon>
        <taxon>Alphaproteobacteria</taxon>
        <taxon>Sphingomonadales</taxon>
        <taxon>Erythrobacteraceae</taxon>
        <taxon>Erythrobacter/Porphyrobacter group</taxon>
        <taxon>Erythrobacter</taxon>
    </lineage>
</organism>
<evidence type="ECO:0000255" key="1">
    <source>
        <dbReference type="HAMAP-Rule" id="MF_00122"/>
    </source>
</evidence>
<sequence length="100" mass="10816">MSVDKETVAKIASLARIKMTDAELEKMAPELSNILDWVEQLGEVDTSDVEPMTAVIPNTLRLREDEVNADPLTGGGVRDKVLANAPAAEHGFFGVPKVIE</sequence>
<protein>
    <recommendedName>
        <fullName evidence="1">Aspartyl/glutamyl-tRNA(Asn/Gln) amidotransferase subunit C</fullName>
        <shortName evidence="1">Asp/Glu-ADT subunit C</shortName>
        <ecNumber evidence="1">6.3.5.-</ecNumber>
    </recommendedName>
</protein>
<name>GATC_ERYLH</name>
<gene>
    <name evidence="1" type="primary">gatC</name>
    <name type="ordered locus">ELI_01365</name>
</gene>
<reference key="1">
    <citation type="journal article" date="2009" name="J. Bacteriol.">
        <title>Complete genome sequence of Erythrobacter litoralis HTCC2594.</title>
        <authorList>
            <person name="Oh H.M."/>
            <person name="Giovannoni S.J."/>
            <person name="Ferriera S."/>
            <person name="Johnson J."/>
            <person name="Cho J.C."/>
        </authorList>
    </citation>
    <scope>NUCLEOTIDE SEQUENCE [LARGE SCALE GENOMIC DNA]</scope>
    <source>
        <strain>HTCC2594</strain>
    </source>
</reference>
<comment type="function">
    <text evidence="1">Allows the formation of correctly charged Asn-tRNA(Asn) or Gln-tRNA(Gln) through the transamidation of misacylated Asp-tRNA(Asn) or Glu-tRNA(Gln) in organisms which lack either or both of asparaginyl-tRNA or glutaminyl-tRNA synthetases. The reaction takes place in the presence of glutamine and ATP through an activated phospho-Asp-tRNA(Asn) or phospho-Glu-tRNA(Gln).</text>
</comment>
<comment type="catalytic activity">
    <reaction evidence="1">
        <text>L-glutamyl-tRNA(Gln) + L-glutamine + ATP + H2O = L-glutaminyl-tRNA(Gln) + L-glutamate + ADP + phosphate + H(+)</text>
        <dbReference type="Rhea" id="RHEA:17521"/>
        <dbReference type="Rhea" id="RHEA-COMP:9681"/>
        <dbReference type="Rhea" id="RHEA-COMP:9684"/>
        <dbReference type="ChEBI" id="CHEBI:15377"/>
        <dbReference type="ChEBI" id="CHEBI:15378"/>
        <dbReference type="ChEBI" id="CHEBI:29985"/>
        <dbReference type="ChEBI" id="CHEBI:30616"/>
        <dbReference type="ChEBI" id="CHEBI:43474"/>
        <dbReference type="ChEBI" id="CHEBI:58359"/>
        <dbReference type="ChEBI" id="CHEBI:78520"/>
        <dbReference type="ChEBI" id="CHEBI:78521"/>
        <dbReference type="ChEBI" id="CHEBI:456216"/>
    </reaction>
</comment>
<comment type="catalytic activity">
    <reaction evidence="1">
        <text>L-aspartyl-tRNA(Asn) + L-glutamine + ATP + H2O = L-asparaginyl-tRNA(Asn) + L-glutamate + ADP + phosphate + 2 H(+)</text>
        <dbReference type="Rhea" id="RHEA:14513"/>
        <dbReference type="Rhea" id="RHEA-COMP:9674"/>
        <dbReference type="Rhea" id="RHEA-COMP:9677"/>
        <dbReference type="ChEBI" id="CHEBI:15377"/>
        <dbReference type="ChEBI" id="CHEBI:15378"/>
        <dbReference type="ChEBI" id="CHEBI:29985"/>
        <dbReference type="ChEBI" id="CHEBI:30616"/>
        <dbReference type="ChEBI" id="CHEBI:43474"/>
        <dbReference type="ChEBI" id="CHEBI:58359"/>
        <dbReference type="ChEBI" id="CHEBI:78515"/>
        <dbReference type="ChEBI" id="CHEBI:78516"/>
        <dbReference type="ChEBI" id="CHEBI:456216"/>
    </reaction>
</comment>
<comment type="subunit">
    <text evidence="1">Heterotrimer of A, B and C subunits.</text>
</comment>
<comment type="similarity">
    <text evidence="1">Belongs to the GatC family.</text>
</comment>
<feature type="chain" id="PRO_1000016121" description="Aspartyl/glutamyl-tRNA(Asn/Gln) amidotransferase subunit C">
    <location>
        <begin position="1"/>
        <end position="100"/>
    </location>
</feature>
<keyword id="KW-0067">ATP-binding</keyword>
<keyword id="KW-0436">Ligase</keyword>
<keyword id="KW-0547">Nucleotide-binding</keyword>
<keyword id="KW-0648">Protein biosynthesis</keyword>
<keyword id="KW-1185">Reference proteome</keyword>
<dbReference type="EC" id="6.3.5.-" evidence="1"/>
<dbReference type="EMBL" id="CP000157">
    <property type="protein sequence ID" value="ABC62365.1"/>
    <property type="molecule type" value="Genomic_DNA"/>
</dbReference>
<dbReference type="RefSeq" id="WP_011413241.1">
    <property type="nucleotide sequence ID" value="NC_007722.1"/>
</dbReference>
<dbReference type="SMR" id="Q2ND76"/>
<dbReference type="STRING" id="314225.ELI_01365"/>
<dbReference type="KEGG" id="eli:ELI_01365"/>
<dbReference type="eggNOG" id="COG0721">
    <property type="taxonomic scope" value="Bacteria"/>
</dbReference>
<dbReference type="HOGENOM" id="CLU_105899_2_0_5"/>
<dbReference type="OrthoDB" id="9794326at2"/>
<dbReference type="Proteomes" id="UP000008808">
    <property type="component" value="Chromosome"/>
</dbReference>
<dbReference type="GO" id="GO:0050566">
    <property type="term" value="F:asparaginyl-tRNA synthase (glutamine-hydrolyzing) activity"/>
    <property type="evidence" value="ECO:0007669"/>
    <property type="project" value="RHEA"/>
</dbReference>
<dbReference type="GO" id="GO:0005524">
    <property type="term" value="F:ATP binding"/>
    <property type="evidence" value="ECO:0007669"/>
    <property type="project" value="UniProtKB-KW"/>
</dbReference>
<dbReference type="GO" id="GO:0050567">
    <property type="term" value="F:glutaminyl-tRNA synthase (glutamine-hydrolyzing) activity"/>
    <property type="evidence" value="ECO:0007669"/>
    <property type="project" value="UniProtKB-UniRule"/>
</dbReference>
<dbReference type="GO" id="GO:0070681">
    <property type="term" value="P:glutaminyl-tRNAGln biosynthesis via transamidation"/>
    <property type="evidence" value="ECO:0007669"/>
    <property type="project" value="TreeGrafter"/>
</dbReference>
<dbReference type="GO" id="GO:0006450">
    <property type="term" value="P:regulation of translational fidelity"/>
    <property type="evidence" value="ECO:0007669"/>
    <property type="project" value="InterPro"/>
</dbReference>
<dbReference type="GO" id="GO:0006412">
    <property type="term" value="P:translation"/>
    <property type="evidence" value="ECO:0007669"/>
    <property type="project" value="UniProtKB-UniRule"/>
</dbReference>
<dbReference type="Gene3D" id="1.10.20.60">
    <property type="entry name" value="Glu-tRNAGln amidotransferase C subunit, N-terminal domain"/>
    <property type="match status" value="1"/>
</dbReference>
<dbReference type="HAMAP" id="MF_00122">
    <property type="entry name" value="GatC"/>
    <property type="match status" value="1"/>
</dbReference>
<dbReference type="InterPro" id="IPR036113">
    <property type="entry name" value="Asp/Glu-ADT_sf_sub_c"/>
</dbReference>
<dbReference type="InterPro" id="IPR003837">
    <property type="entry name" value="GatC"/>
</dbReference>
<dbReference type="NCBIfam" id="TIGR00135">
    <property type="entry name" value="gatC"/>
    <property type="match status" value="1"/>
</dbReference>
<dbReference type="PANTHER" id="PTHR15004">
    <property type="entry name" value="GLUTAMYL-TRNA(GLN) AMIDOTRANSFERASE SUBUNIT C, MITOCHONDRIAL"/>
    <property type="match status" value="1"/>
</dbReference>
<dbReference type="PANTHER" id="PTHR15004:SF0">
    <property type="entry name" value="GLUTAMYL-TRNA(GLN) AMIDOTRANSFERASE SUBUNIT C, MITOCHONDRIAL"/>
    <property type="match status" value="1"/>
</dbReference>
<dbReference type="Pfam" id="PF02686">
    <property type="entry name" value="GatC"/>
    <property type="match status" value="1"/>
</dbReference>
<dbReference type="SUPFAM" id="SSF141000">
    <property type="entry name" value="Glu-tRNAGln amidotransferase C subunit"/>
    <property type="match status" value="1"/>
</dbReference>
<accession>Q2ND76</accession>